<comment type="function">
    <text evidence="1">Endoribonuclease that initiates mRNA decay.</text>
</comment>
<comment type="subcellular location">
    <subcellularLocation>
        <location evidence="1">Cell membrane</location>
        <topology evidence="1">Single-pass membrane protein</topology>
    </subcellularLocation>
</comment>
<comment type="similarity">
    <text evidence="1">Belongs to the RNase Y family.</text>
</comment>
<organism>
    <name type="scientific">Salinispora tropica (strain ATCC BAA-916 / DSM 44818 / JCM 13857 / NBRC 105044 / CNB-440)</name>
    <dbReference type="NCBI Taxonomy" id="369723"/>
    <lineage>
        <taxon>Bacteria</taxon>
        <taxon>Bacillati</taxon>
        <taxon>Actinomycetota</taxon>
        <taxon>Actinomycetes</taxon>
        <taxon>Micromonosporales</taxon>
        <taxon>Micromonosporaceae</taxon>
        <taxon>Salinispora</taxon>
    </lineage>
</organism>
<proteinExistence type="inferred from homology"/>
<dbReference type="EC" id="3.1.-.-" evidence="1"/>
<dbReference type="EMBL" id="CP000667">
    <property type="protein sequence ID" value="ABP53893.1"/>
    <property type="molecule type" value="Genomic_DNA"/>
</dbReference>
<dbReference type="RefSeq" id="WP_011905325.1">
    <property type="nucleotide sequence ID" value="NC_009380.1"/>
</dbReference>
<dbReference type="STRING" id="369723.Strop_1427"/>
<dbReference type="KEGG" id="stp:Strop_1427"/>
<dbReference type="PATRIC" id="fig|369723.5.peg.1454"/>
<dbReference type="eggNOG" id="COG1418">
    <property type="taxonomic scope" value="Bacteria"/>
</dbReference>
<dbReference type="HOGENOM" id="CLU_028328_1_0_11"/>
<dbReference type="Proteomes" id="UP000000235">
    <property type="component" value="Chromosome"/>
</dbReference>
<dbReference type="GO" id="GO:0005886">
    <property type="term" value="C:plasma membrane"/>
    <property type="evidence" value="ECO:0007669"/>
    <property type="project" value="UniProtKB-SubCell"/>
</dbReference>
<dbReference type="GO" id="GO:0003723">
    <property type="term" value="F:RNA binding"/>
    <property type="evidence" value="ECO:0007669"/>
    <property type="project" value="UniProtKB-UniRule"/>
</dbReference>
<dbReference type="GO" id="GO:0004521">
    <property type="term" value="F:RNA endonuclease activity"/>
    <property type="evidence" value="ECO:0007669"/>
    <property type="project" value="UniProtKB-UniRule"/>
</dbReference>
<dbReference type="GO" id="GO:0006402">
    <property type="term" value="P:mRNA catabolic process"/>
    <property type="evidence" value="ECO:0007669"/>
    <property type="project" value="UniProtKB-UniRule"/>
</dbReference>
<dbReference type="CDD" id="cd00077">
    <property type="entry name" value="HDc"/>
    <property type="match status" value="1"/>
</dbReference>
<dbReference type="CDD" id="cd22431">
    <property type="entry name" value="KH-I_RNaseY"/>
    <property type="match status" value="1"/>
</dbReference>
<dbReference type="Gene3D" id="1.10.3210.10">
    <property type="entry name" value="Hypothetical protein af1432"/>
    <property type="match status" value="1"/>
</dbReference>
<dbReference type="HAMAP" id="MF_00335">
    <property type="entry name" value="RNase_Y"/>
    <property type="match status" value="1"/>
</dbReference>
<dbReference type="InterPro" id="IPR003607">
    <property type="entry name" value="HD/PDEase_dom"/>
</dbReference>
<dbReference type="InterPro" id="IPR006674">
    <property type="entry name" value="HD_domain"/>
</dbReference>
<dbReference type="InterPro" id="IPR006675">
    <property type="entry name" value="HDIG_dom"/>
</dbReference>
<dbReference type="InterPro" id="IPR004087">
    <property type="entry name" value="KH_dom"/>
</dbReference>
<dbReference type="InterPro" id="IPR004088">
    <property type="entry name" value="KH_dom_type_1"/>
</dbReference>
<dbReference type="InterPro" id="IPR036612">
    <property type="entry name" value="KH_dom_type_1_sf"/>
</dbReference>
<dbReference type="InterPro" id="IPR017705">
    <property type="entry name" value="Ribonuclease_Y"/>
</dbReference>
<dbReference type="InterPro" id="IPR022711">
    <property type="entry name" value="RNase_Y_N"/>
</dbReference>
<dbReference type="NCBIfam" id="TIGR00277">
    <property type="entry name" value="HDIG"/>
    <property type="match status" value="1"/>
</dbReference>
<dbReference type="NCBIfam" id="TIGR03319">
    <property type="entry name" value="RNase_Y"/>
    <property type="match status" value="1"/>
</dbReference>
<dbReference type="PANTHER" id="PTHR12826">
    <property type="entry name" value="RIBONUCLEASE Y"/>
    <property type="match status" value="1"/>
</dbReference>
<dbReference type="PANTHER" id="PTHR12826:SF15">
    <property type="entry name" value="RIBONUCLEASE Y"/>
    <property type="match status" value="1"/>
</dbReference>
<dbReference type="Pfam" id="PF01966">
    <property type="entry name" value="HD"/>
    <property type="match status" value="1"/>
</dbReference>
<dbReference type="Pfam" id="PF00013">
    <property type="entry name" value="KH_1"/>
    <property type="match status" value="1"/>
</dbReference>
<dbReference type="Pfam" id="PF12072">
    <property type="entry name" value="RNase_Y_N"/>
    <property type="match status" value="1"/>
</dbReference>
<dbReference type="SMART" id="SM00471">
    <property type="entry name" value="HDc"/>
    <property type="match status" value="1"/>
</dbReference>
<dbReference type="SMART" id="SM00322">
    <property type="entry name" value="KH"/>
    <property type="match status" value="1"/>
</dbReference>
<dbReference type="SUPFAM" id="SSF54791">
    <property type="entry name" value="Eukaryotic type KH-domain (KH-domain type I)"/>
    <property type="match status" value="1"/>
</dbReference>
<dbReference type="SUPFAM" id="SSF109604">
    <property type="entry name" value="HD-domain/PDEase-like"/>
    <property type="match status" value="1"/>
</dbReference>
<dbReference type="PROSITE" id="PS51831">
    <property type="entry name" value="HD"/>
    <property type="match status" value="1"/>
</dbReference>
<dbReference type="PROSITE" id="PS50084">
    <property type="entry name" value="KH_TYPE_1"/>
    <property type="match status" value="1"/>
</dbReference>
<accession>A4X4U3</accession>
<name>RNY_SALTO</name>
<feature type="chain" id="PRO_0000344931" description="Ribonuclease Y">
    <location>
        <begin position="1"/>
        <end position="588"/>
    </location>
</feature>
<feature type="transmembrane region" description="Helical" evidence="1">
    <location>
        <begin position="7"/>
        <end position="27"/>
    </location>
</feature>
<feature type="domain" description="KH" evidence="1">
    <location>
        <begin position="278"/>
        <end position="359"/>
    </location>
</feature>
<feature type="domain" description="HD" evidence="2">
    <location>
        <begin position="404"/>
        <end position="497"/>
    </location>
</feature>
<gene>
    <name evidence="1" type="primary">rny</name>
    <name type="ordered locus">Strop_1427</name>
</gene>
<protein>
    <recommendedName>
        <fullName evidence="1">Ribonuclease Y</fullName>
        <shortName evidence="1">RNase Y</shortName>
        <ecNumber evidence="1">3.1.-.-</ecNumber>
    </recommendedName>
</protein>
<sequence>MNGFDAVLLVAVLLLTVVVVGAVLVGVRAVRGLAGTSRPDDPAFIAEKDRQEQSLAALRSAAEEANSTIDAAKSAAAAARTEAAAARAEAKAARAEARRVLDGARAEAEAILERVHKQAETEAEQLRTAARRSGEREAAVLAVTTRDQAAEVERRAVRMDDRERLHTEEVERLAERDRQLSAANAALEARESALAERDRELEQAEQRRRRELERVAGLTAEAARGELVEAIEAQAKREAALRVRDIEAEARSTGEERARHIVVDAIQRVASEQTAESVVSVLHLPGDEMKGRIIGREGRNIRTFESITGVNLIIDDTPEAVLLSCFDPVRREVGRLTLEKLVLDGRIHPHRIEEVHDLARQEVAQLCQRAAEDALVEVGITEIHPELVGLLGRLRYRTSYGQNVLKHLVESAHIAGIMAAELRLDVPTIKRCAFLHDIGKALTHEVEGSHAIVGADVARRYGESEDVVHAIEAHHNEVPPQTVEAVLTQASDACSGGRPGARRESLEAYVRRLERIEEIAGGKLGVERVFAMQAGREVRVMVRPDDVDDLSASMLARDVAKQIEEELTYPGQIRVTVVRESRVTEIAR</sequence>
<keyword id="KW-1003">Cell membrane</keyword>
<keyword id="KW-0255">Endonuclease</keyword>
<keyword id="KW-0378">Hydrolase</keyword>
<keyword id="KW-0472">Membrane</keyword>
<keyword id="KW-0540">Nuclease</keyword>
<keyword id="KW-1185">Reference proteome</keyword>
<keyword id="KW-0694">RNA-binding</keyword>
<keyword id="KW-0812">Transmembrane</keyword>
<keyword id="KW-1133">Transmembrane helix</keyword>
<reference key="1">
    <citation type="journal article" date="2007" name="Proc. Natl. Acad. Sci. U.S.A.">
        <title>Genome sequencing reveals complex secondary metabolome in the marine actinomycete Salinispora tropica.</title>
        <authorList>
            <person name="Udwary D.W."/>
            <person name="Zeigler L."/>
            <person name="Asolkar R.N."/>
            <person name="Singan V."/>
            <person name="Lapidus A."/>
            <person name="Fenical W."/>
            <person name="Jensen P.R."/>
            <person name="Moore B.S."/>
        </authorList>
    </citation>
    <scope>NUCLEOTIDE SEQUENCE [LARGE SCALE GENOMIC DNA]</scope>
    <source>
        <strain>ATCC BAA-916 / DSM 44818 / JCM 13857 / NBRC 105044 / CNB-440</strain>
    </source>
</reference>
<evidence type="ECO:0000255" key="1">
    <source>
        <dbReference type="HAMAP-Rule" id="MF_00335"/>
    </source>
</evidence>
<evidence type="ECO:0000255" key="2">
    <source>
        <dbReference type="PROSITE-ProRule" id="PRU01175"/>
    </source>
</evidence>